<keyword id="KW-1185">Reference proteome</keyword>
<proteinExistence type="predicted"/>
<name>YR744_MIMIV</name>
<gene>
    <name type="ordered locus">MIMI_R744</name>
</gene>
<organismHost>
    <name type="scientific">Acanthamoeba polyphaga</name>
    <name type="common">Amoeba</name>
    <dbReference type="NCBI Taxonomy" id="5757"/>
</organismHost>
<sequence length="181" mass="21727">MFYKIYYIYPNKQLESVEDYEYVDIQSATNCMFDYIWRHKKPKPTQKITDFINMDCTYSIGIFSINVYNKYNKLICITNTNELKFSGKRIEIISRIKKIPITDNYPEHIFYVYDNLPDNTNVAVLCKICLVKICVNMKQMILQKKYPLKYSKNICAIKYMIQIIQINQQINFFVIYIFSTK</sequence>
<reference key="1">
    <citation type="journal article" date="2004" name="Science">
        <title>The 1.2-megabase genome sequence of Mimivirus.</title>
        <authorList>
            <person name="Raoult D."/>
            <person name="Audic S."/>
            <person name="Robert C."/>
            <person name="Abergel C."/>
            <person name="Renesto P."/>
            <person name="Ogata H."/>
            <person name="La Scola B."/>
            <person name="Susan M."/>
            <person name="Claverie J.-M."/>
        </authorList>
    </citation>
    <scope>NUCLEOTIDE SEQUENCE [LARGE SCALE GENOMIC DNA]</scope>
    <source>
        <strain>Rowbotham-Bradford</strain>
    </source>
</reference>
<protein>
    <recommendedName>
        <fullName>Uncharacterized protein R744</fullName>
    </recommendedName>
</protein>
<accession>Q5UNZ4</accession>
<dbReference type="EMBL" id="AY653733">
    <property type="protein sequence ID" value="AAV51004.1"/>
    <property type="molecule type" value="Genomic_DNA"/>
</dbReference>
<dbReference type="Proteomes" id="UP000001134">
    <property type="component" value="Genome"/>
</dbReference>
<organism>
    <name type="scientific">Acanthamoeba polyphaga mimivirus</name>
    <name type="common">APMV</name>
    <dbReference type="NCBI Taxonomy" id="212035"/>
    <lineage>
        <taxon>Viruses</taxon>
        <taxon>Varidnaviria</taxon>
        <taxon>Bamfordvirae</taxon>
        <taxon>Nucleocytoviricota</taxon>
        <taxon>Megaviricetes</taxon>
        <taxon>Imitervirales</taxon>
        <taxon>Mimiviridae</taxon>
        <taxon>Megamimivirinae</taxon>
        <taxon>Mimivirus</taxon>
        <taxon>Mimivirus bradfordmassiliense</taxon>
    </lineage>
</organism>
<feature type="chain" id="PRO_0000247412" description="Uncharacterized protein R744">
    <location>
        <begin position="1"/>
        <end position="181"/>
    </location>
</feature>